<gene>
    <name evidence="1" type="primary">dapF</name>
    <name type="ordered locus">SFV_3690</name>
</gene>
<proteinExistence type="inferred from homology"/>
<comment type="function">
    <text evidence="1">Catalyzes the stereoinversion of LL-2,6-diaminopimelate (L,L-DAP) to meso-diaminopimelate (meso-DAP), a precursor of L-lysine and an essential component of the bacterial peptidoglycan.</text>
</comment>
<comment type="catalytic activity">
    <reaction evidence="1">
        <text>(2S,6S)-2,6-diaminopimelate = meso-2,6-diaminopimelate</text>
        <dbReference type="Rhea" id="RHEA:15393"/>
        <dbReference type="ChEBI" id="CHEBI:57609"/>
        <dbReference type="ChEBI" id="CHEBI:57791"/>
        <dbReference type="EC" id="5.1.1.7"/>
    </reaction>
</comment>
<comment type="pathway">
    <text evidence="1">Amino-acid biosynthesis; L-lysine biosynthesis via DAP pathway; DL-2,6-diaminopimelate from LL-2,6-diaminopimelate: step 1/1.</text>
</comment>
<comment type="subunit">
    <text evidence="1">Homodimer.</text>
</comment>
<comment type="subcellular location">
    <subcellularLocation>
        <location evidence="1">Cytoplasm</location>
    </subcellularLocation>
</comment>
<comment type="similarity">
    <text evidence="1">Belongs to the diaminopimelate epimerase family.</text>
</comment>
<keyword id="KW-0028">Amino-acid biosynthesis</keyword>
<keyword id="KW-0963">Cytoplasm</keyword>
<keyword id="KW-0413">Isomerase</keyword>
<keyword id="KW-0457">Lysine biosynthesis</keyword>
<reference key="1">
    <citation type="journal article" date="2006" name="BMC Genomics">
        <title>Complete genome sequence of Shigella flexneri 5b and comparison with Shigella flexneri 2a.</title>
        <authorList>
            <person name="Nie H."/>
            <person name="Yang F."/>
            <person name="Zhang X."/>
            <person name="Yang J."/>
            <person name="Chen L."/>
            <person name="Wang J."/>
            <person name="Xiong Z."/>
            <person name="Peng J."/>
            <person name="Sun L."/>
            <person name="Dong J."/>
            <person name="Xue Y."/>
            <person name="Xu X."/>
            <person name="Chen S."/>
            <person name="Yao Z."/>
            <person name="Shen Y."/>
            <person name="Jin Q."/>
        </authorList>
    </citation>
    <scope>NUCLEOTIDE SEQUENCE [LARGE SCALE GENOMIC DNA]</scope>
    <source>
        <strain>8401</strain>
    </source>
</reference>
<feature type="chain" id="PRO_1000011970" description="Diaminopimelate epimerase">
    <location>
        <begin position="1"/>
        <end position="274"/>
    </location>
</feature>
<feature type="active site" description="Proton donor" evidence="1">
    <location>
        <position position="73"/>
    </location>
</feature>
<feature type="active site" description="Proton acceptor" evidence="1">
    <location>
        <position position="217"/>
    </location>
</feature>
<feature type="binding site" evidence="1">
    <location>
        <position position="11"/>
    </location>
    <ligand>
        <name>substrate</name>
    </ligand>
</feature>
<feature type="binding site" evidence="1">
    <location>
        <position position="44"/>
    </location>
    <ligand>
        <name>substrate</name>
    </ligand>
</feature>
<feature type="binding site" evidence="1">
    <location>
        <position position="64"/>
    </location>
    <ligand>
        <name>substrate</name>
    </ligand>
</feature>
<feature type="binding site" evidence="1">
    <location>
        <begin position="74"/>
        <end position="75"/>
    </location>
    <ligand>
        <name>substrate</name>
    </ligand>
</feature>
<feature type="binding site" evidence="1">
    <location>
        <position position="157"/>
    </location>
    <ligand>
        <name>substrate</name>
    </ligand>
</feature>
<feature type="binding site" evidence="1">
    <location>
        <position position="190"/>
    </location>
    <ligand>
        <name>substrate</name>
    </ligand>
</feature>
<feature type="binding site" evidence="1">
    <location>
        <begin position="208"/>
        <end position="209"/>
    </location>
    <ligand>
        <name>substrate</name>
    </ligand>
</feature>
<feature type="binding site" evidence="1">
    <location>
        <begin position="218"/>
        <end position="219"/>
    </location>
    <ligand>
        <name>substrate</name>
    </ligand>
</feature>
<feature type="site" description="Could be important to modulate the pK values of the two catalytic cysteine residues" evidence="1">
    <location>
        <position position="159"/>
    </location>
</feature>
<feature type="site" description="Could be important to modulate the pK values of the two catalytic cysteine residues" evidence="1">
    <location>
        <position position="208"/>
    </location>
</feature>
<feature type="site" description="Important for dimerization" evidence="1">
    <location>
        <position position="268"/>
    </location>
</feature>
<dbReference type="EC" id="5.1.1.7" evidence="1"/>
<dbReference type="EMBL" id="CP000266">
    <property type="protein sequence ID" value="ABF05715.1"/>
    <property type="molecule type" value="Genomic_DNA"/>
</dbReference>
<dbReference type="RefSeq" id="WP_005001985.1">
    <property type="nucleotide sequence ID" value="NC_008258.1"/>
</dbReference>
<dbReference type="SMR" id="Q0SZ00"/>
<dbReference type="KEGG" id="sfv:SFV_3690"/>
<dbReference type="HOGENOM" id="CLU_053306_1_1_6"/>
<dbReference type="UniPathway" id="UPA00034">
    <property type="reaction ID" value="UER00025"/>
</dbReference>
<dbReference type="Proteomes" id="UP000000659">
    <property type="component" value="Chromosome"/>
</dbReference>
<dbReference type="GO" id="GO:0005829">
    <property type="term" value="C:cytosol"/>
    <property type="evidence" value="ECO:0007669"/>
    <property type="project" value="TreeGrafter"/>
</dbReference>
<dbReference type="GO" id="GO:0008837">
    <property type="term" value="F:diaminopimelate epimerase activity"/>
    <property type="evidence" value="ECO:0007669"/>
    <property type="project" value="UniProtKB-UniRule"/>
</dbReference>
<dbReference type="GO" id="GO:0009089">
    <property type="term" value="P:lysine biosynthetic process via diaminopimelate"/>
    <property type="evidence" value="ECO:0007669"/>
    <property type="project" value="UniProtKB-UniRule"/>
</dbReference>
<dbReference type="FunFam" id="3.10.310.10:FF:000001">
    <property type="entry name" value="Diaminopimelate epimerase"/>
    <property type="match status" value="1"/>
</dbReference>
<dbReference type="FunFam" id="3.10.310.10:FF:000002">
    <property type="entry name" value="Diaminopimelate epimerase"/>
    <property type="match status" value="1"/>
</dbReference>
<dbReference type="Gene3D" id="3.10.310.10">
    <property type="entry name" value="Diaminopimelate Epimerase, Chain A, domain 1"/>
    <property type="match status" value="2"/>
</dbReference>
<dbReference type="HAMAP" id="MF_00197">
    <property type="entry name" value="DAP_epimerase"/>
    <property type="match status" value="1"/>
</dbReference>
<dbReference type="InterPro" id="IPR018510">
    <property type="entry name" value="DAP_epimerase_AS"/>
</dbReference>
<dbReference type="InterPro" id="IPR001653">
    <property type="entry name" value="DAP_epimerase_DapF"/>
</dbReference>
<dbReference type="NCBIfam" id="TIGR00652">
    <property type="entry name" value="DapF"/>
    <property type="match status" value="1"/>
</dbReference>
<dbReference type="PANTHER" id="PTHR31689:SF0">
    <property type="entry name" value="DIAMINOPIMELATE EPIMERASE"/>
    <property type="match status" value="1"/>
</dbReference>
<dbReference type="PANTHER" id="PTHR31689">
    <property type="entry name" value="DIAMINOPIMELATE EPIMERASE, CHLOROPLASTIC"/>
    <property type="match status" value="1"/>
</dbReference>
<dbReference type="Pfam" id="PF01678">
    <property type="entry name" value="DAP_epimerase"/>
    <property type="match status" value="2"/>
</dbReference>
<dbReference type="SUPFAM" id="SSF54506">
    <property type="entry name" value="Diaminopimelate epimerase-like"/>
    <property type="match status" value="1"/>
</dbReference>
<dbReference type="PROSITE" id="PS01326">
    <property type="entry name" value="DAP_EPIMERASE"/>
    <property type="match status" value="1"/>
</dbReference>
<sequence>MQFSKMHGLGNDFMVVDAVTQNVFFSPELIRRLADRHLGVGFDQLLVVEPPYDPELDFHYRIFNADGSEVAQCGNGARCFARFVRLKGLTNKRDIRVSTANGRMVLTVTDDDLVRVNMGEPNFEPSAVPFRANKAEKTYIMRAAEQTILCGVVSMGNPHCVIQVDDVDTAAVETLGPVLESHERFPERANIGFMQVVKREHIRLRVYERGAGETQACGSGACAAVAVGIQQGLLDEEVRVELPGGRLDIAWKGPGHPLYMTGPAVHVYDGFIHL</sequence>
<accession>Q0SZ00</accession>
<evidence type="ECO:0000255" key="1">
    <source>
        <dbReference type="HAMAP-Rule" id="MF_00197"/>
    </source>
</evidence>
<protein>
    <recommendedName>
        <fullName evidence="1">Diaminopimelate epimerase</fullName>
        <shortName evidence="1">DAP epimerase</shortName>
        <ecNumber evidence="1">5.1.1.7</ecNumber>
    </recommendedName>
    <alternativeName>
        <fullName evidence="1">PLP-independent amino acid racemase</fullName>
    </alternativeName>
</protein>
<organism>
    <name type="scientific">Shigella flexneri serotype 5b (strain 8401)</name>
    <dbReference type="NCBI Taxonomy" id="373384"/>
    <lineage>
        <taxon>Bacteria</taxon>
        <taxon>Pseudomonadati</taxon>
        <taxon>Pseudomonadota</taxon>
        <taxon>Gammaproteobacteria</taxon>
        <taxon>Enterobacterales</taxon>
        <taxon>Enterobacteriaceae</taxon>
        <taxon>Shigella</taxon>
    </lineage>
</organism>
<name>DAPF_SHIF8</name>